<name>Y1405_RHOPS</name>
<organism>
    <name type="scientific">Rhodopseudomonas palustris (strain BisB5)</name>
    <dbReference type="NCBI Taxonomy" id="316057"/>
    <lineage>
        <taxon>Bacteria</taxon>
        <taxon>Pseudomonadati</taxon>
        <taxon>Pseudomonadota</taxon>
        <taxon>Alphaproteobacteria</taxon>
        <taxon>Hyphomicrobiales</taxon>
        <taxon>Nitrobacteraceae</taxon>
        <taxon>Rhodopseudomonas</taxon>
    </lineage>
</organism>
<reference key="1">
    <citation type="submission" date="2006-03" db="EMBL/GenBank/DDBJ databases">
        <title>Complete sequence of Rhodopseudomonas palustris BisB5.</title>
        <authorList>
            <consortium name="US DOE Joint Genome Institute"/>
            <person name="Copeland A."/>
            <person name="Lucas S."/>
            <person name="Lapidus A."/>
            <person name="Barry K."/>
            <person name="Detter J.C."/>
            <person name="Glavina del Rio T."/>
            <person name="Hammon N."/>
            <person name="Israni S."/>
            <person name="Dalin E."/>
            <person name="Tice H."/>
            <person name="Pitluck S."/>
            <person name="Chain P."/>
            <person name="Malfatti S."/>
            <person name="Shin M."/>
            <person name="Vergez L."/>
            <person name="Schmutz J."/>
            <person name="Larimer F."/>
            <person name="Land M."/>
            <person name="Hauser L."/>
            <person name="Pelletier D.A."/>
            <person name="Kyrpides N."/>
            <person name="Lykidis A."/>
            <person name="Oda Y."/>
            <person name="Harwood C.S."/>
            <person name="Richardson P."/>
        </authorList>
    </citation>
    <scope>NUCLEOTIDE SEQUENCE [LARGE SCALE GENOMIC DNA]</scope>
    <source>
        <strain>BisB5</strain>
    </source>
</reference>
<accession>Q13B97</accession>
<dbReference type="EMBL" id="CP000283">
    <property type="protein sequence ID" value="ABE38642.1"/>
    <property type="molecule type" value="Genomic_DNA"/>
</dbReference>
<dbReference type="SMR" id="Q13B97"/>
<dbReference type="STRING" id="316057.RPD_1405"/>
<dbReference type="KEGG" id="rpd:RPD_1405"/>
<dbReference type="eggNOG" id="COG3750">
    <property type="taxonomic scope" value="Bacteria"/>
</dbReference>
<dbReference type="HOGENOM" id="CLU_158651_2_0_5"/>
<dbReference type="BioCyc" id="RPAL316057:RPD_RS07095-MONOMER"/>
<dbReference type="Proteomes" id="UP000001818">
    <property type="component" value="Chromosome"/>
</dbReference>
<dbReference type="GO" id="GO:0003677">
    <property type="term" value="F:DNA binding"/>
    <property type="evidence" value="ECO:0007669"/>
    <property type="project" value="InterPro"/>
</dbReference>
<dbReference type="HAMAP" id="MF_00797">
    <property type="entry name" value="UPF0335"/>
    <property type="match status" value="1"/>
</dbReference>
<dbReference type="InterPro" id="IPR018753">
    <property type="entry name" value="GapR-like"/>
</dbReference>
<dbReference type="InterPro" id="IPR046367">
    <property type="entry name" value="GapR-like_DNA-bd"/>
</dbReference>
<dbReference type="NCBIfam" id="NF010247">
    <property type="entry name" value="PRK13694.1"/>
    <property type="match status" value="1"/>
</dbReference>
<dbReference type="Pfam" id="PF10073">
    <property type="entry name" value="GapR_DNA-bd"/>
    <property type="match status" value="1"/>
</dbReference>
<evidence type="ECO:0000255" key="1">
    <source>
        <dbReference type="HAMAP-Rule" id="MF_00797"/>
    </source>
</evidence>
<comment type="similarity">
    <text evidence="1">Belongs to the UPF0335 family.</text>
</comment>
<protein>
    <recommendedName>
        <fullName evidence="1">UPF0335 protein RPD_1405</fullName>
    </recommendedName>
</protein>
<sequence>MATSAAAVQDEPATRFAKDQLKAIIERIERLEEEKKTISDDIRDVYAEAKGNGYDVKALRTIVRMRKQDANERAEQETILETYMQALGML</sequence>
<gene>
    <name type="ordered locus">RPD_1405</name>
</gene>
<feature type="chain" id="PRO_1000046965" description="UPF0335 protein RPD_1405">
    <location>
        <begin position="1"/>
        <end position="90"/>
    </location>
</feature>
<proteinExistence type="inferred from homology"/>